<reference key="1">
    <citation type="journal article" date="2006" name="J. Bacteriol.">
        <title>Complete genome sequence of the dehalorespiring bacterium Desulfitobacterium hafniense Y51 and comparison with Dehalococcoides ethenogenes 195.</title>
        <authorList>
            <person name="Nonaka H."/>
            <person name="Keresztes G."/>
            <person name="Shinoda Y."/>
            <person name="Ikenaga Y."/>
            <person name="Abe M."/>
            <person name="Naito K."/>
            <person name="Inatomi K."/>
            <person name="Furukawa K."/>
            <person name="Inui M."/>
            <person name="Yukawa H."/>
        </authorList>
    </citation>
    <scope>NUCLEOTIDE SEQUENCE [LARGE SCALE GENOMIC DNA]</scope>
    <source>
        <strain>Y51</strain>
    </source>
</reference>
<gene>
    <name evidence="1" type="primary">rnhB</name>
    <name type="ordered locus">DSY2589</name>
</gene>
<dbReference type="EC" id="3.1.26.4" evidence="1"/>
<dbReference type="EMBL" id="AP008230">
    <property type="protein sequence ID" value="BAE84378.1"/>
    <property type="molecule type" value="Genomic_DNA"/>
</dbReference>
<dbReference type="SMR" id="Q24UB4"/>
<dbReference type="STRING" id="138119.DSY2589"/>
<dbReference type="KEGG" id="dsy:DSY2589"/>
<dbReference type="eggNOG" id="COG0164">
    <property type="taxonomic scope" value="Bacteria"/>
</dbReference>
<dbReference type="HOGENOM" id="CLU_036532_2_1_9"/>
<dbReference type="Proteomes" id="UP000001946">
    <property type="component" value="Chromosome"/>
</dbReference>
<dbReference type="GO" id="GO:0005737">
    <property type="term" value="C:cytoplasm"/>
    <property type="evidence" value="ECO:0007669"/>
    <property type="project" value="UniProtKB-SubCell"/>
</dbReference>
<dbReference type="GO" id="GO:0032299">
    <property type="term" value="C:ribonuclease H2 complex"/>
    <property type="evidence" value="ECO:0007669"/>
    <property type="project" value="TreeGrafter"/>
</dbReference>
<dbReference type="GO" id="GO:0030145">
    <property type="term" value="F:manganese ion binding"/>
    <property type="evidence" value="ECO:0007669"/>
    <property type="project" value="UniProtKB-UniRule"/>
</dbReference>
<dbReference type="GO" id="GO:0003723">
    <property type="term" value="F:RNA binding"/>
    <property type="evidence" value="ECO:0007669"/>
    <property type="project" value="InterPro"/>
</dbReference>
<dbReference type="GO" id="GO:0004523">
    <property type="term" value="F:RNA-DNA hybrid ribonuclease activity"/>
    <property type="evidence" value="ECO:0007669"/>
    <property type="project" value="UniProtKB-UniRule"/>
</dbReference>
<dbReference type="GO" id="GO:0043137">
    <property type="term" value="P:DNA replication, removal of RNA primer"/>
    <property type="evidence" value="ECO:0007669"/>
    <property type="project" value="TreeGrafter"/>
</dbReference>
<dbReference type="GO" id="GO:0006298">
    <property type="term" value="P:mismatch repair"/>
    <property type="evidence" value="ECO:0007669"/>
    <property type="project" value="TreeGrafter"/>
</dbReference>
<dbReference type="CDD" id="cd07182">
    <property type="entry name" value="RNase_HII_bacteria_HII_like"/>
    <property type="match status" value="1"/>
</dbReference>
<dbReference type="FunFam" id="3.30.420.10:FF:000006">
    <property type="entry name" value="Ribonuclease HII"/>
    <property type="match status" value="1"/>
</dbReference>
<dbReference type="Gene3D" id="3.30.420.10">
    <property type="entry name" value="Ribonuclease H-like superfamily/Ribonuclease H"/>
    <property type="match status" value="1"/>
</dbReference>
<dbReference type="HAMAP" id="MF_00052_B">
    <property type="entry name" value="RNase_HII_B"/>
    <property type="match status" value="1"/>
</dbReference>
<dbReference type="InterPro" id="IPR022898">
    <property type="entry name" value="RNase_HII"/>
</dbReference>
<dbReference type="InterPro" id="IPR001352">
    <property type="entry name" value="RNase_HII/HIII"/>
</dbReference>
<dbReference type="InterPro" id="IPR024567">
    <property type="entry name" value="RNase_HII/HIII_dom"/>
</dbReference>
<dbReference type="InterPro" id="IPR012337">
    <property type="entry name" value="RNaseH-like_sf"/>
</dbReference>
<dbReference type="InterPro" id="IPR036397">
    <property type="entry name" value="RNaseH_sf"/>
</dbReference>
<dbReference type="NCBIfam" id="NF000594">
    <property type="entry name" value="PRK00015.1-1"/>
    <property type="match status" value="1"/>
</dbReference>
<dbReference type="NCBIfam" id="NF000595">
    <property type="entry name" value="PRK00015.1-3"/>
    <property type="match status" value="1"/>
</dbReference>
<dbReference type="NCBIfam" id="NF000596">
    <property type="entry name" value="PRK00015.1-4"/>
    <property type="match status" value="1"/>
</dbReference>
<dbReference type="PANTHER" id="PTHR10954">
    <property type="entry name" value="RIBONUCLEASE H2 SUBUNIT A"/>
    <property type="match status" value="1"/>
</dbReference>
<dbReference type="PANTHER" id="PTHR10954:SF18">
    <property type="entry name" value="RIBONUCLEASE HII"/>
    <property type="match status" value="1"/>
</dbReference>
<dbReference type="Pfam" id="PF01351">
    <property type="entry name" value="RNase_HII"/>
    <property type="match status" value="1"/>
</dbReference>
<dbReference type="SUPFAM" id="SSF53098">
    <property type="entry name" value="Ribonuclease H-like"/>
    <property type="match status" value="1"/>
</dbReference>
<dbReference type="PROSITE" id="PS51975">
    <property type="entry name" value="RNASE_H_2"/>
    <property type="match status" value="1"/>
</dbReference>
<protein>
    <recommendedName>
        <fullName evidence="1">Ribonuclease HII</fullName>
        <shortName evidence="1">RNase HII</shortName>
        <ecNumber evidence="1">3.1.26.4</ecNumber>
    </recommendedName>
</protein>
<feature type="chain" id="PRO_0000334891" description="Ribonuclease HII">
    <location>
        <begin position="1"/>
        <end position="260"/>
    </location>
</feature>
<feature type="domain" description="RNase H type-2" evidence="2">
    <location>
        <begin position="73"/>
        <end position="260"/>
    </location>
</feature>
<feature type="binding site" evidence="1">
    <location>
        <position position="79"/>
    </location>
    <ligand>
        <name>a divalent metal cation</name>
        <dbReference type="ChEBI" id="CHEBI:60240"/>
    </ligand>
</feature>
<feature type="binding site" evidence="1">
    <location>
        <position position="80"/>
    </location>
    <ligand>
        <name>a divalent metal cation</name>
        <dbReference type="ChEBI" id="CHEBI:60240"/>
    </ligand>
</feature>
<feature type="binding site" evidence="1">
    <location>
        <position position="171"/>
    </location>
    <ligand>
        <name>a divalent metal cation</name>
        <dbReference type="ChEBI" id="CHEBI:60240"/>
    </ligand>
</feature>
<evidence type="ECO:0000255" key="1">
    <source>
        <dbReference type="HAMAP-Rule" id="MF_00052"/>
    </source>
</evidence>
<evidence type="ECO:0000255" key="2">
    <source>
        <dbReference type="PROSITE-ProRule" id="PRU01319"/>
    </source>
</evidence>
<proteinExistence type="inferred from homology"/>
<comment type="function">
    <text evidence="1">Endonuclease that specifically degrades the RNA of RNA-DNA hybrids.</text>
</comment>
<comment type="catalytic activity">
    <reaction evidence="1">
        <text>Endonucleolytic cleavage to 5'-phosphomonoester.</text>
        <dbReference type="EC" id="3.1.26.4"/>
    </reaction>
</comment>
<comment type="cofactor">
    <cofactor evidence="1">
        <name>Mn(2+)</name>
        <dbReference type="ChEBI" id="CHEBI:29035"/>
    </cofactor>
    <cofactor evidence="1">
        <name>Mg(2+)</name>
        <dbReference type="ChEBI" id="CHEBI:18420"/>
    </cofactor>
    <text evidence="1">Manganese or magnesium. Binds 1 divalent metal ion per monomer in the absence of substrate. May bind a second metal ion after substrate binding.</text>
</comment>
<comment type="subcellular location">
    <subcellularLocation>
        <location evidence="1">Cytoplasm</location>
    </subcellularLocation>
</comment>
<comment type="similarity">
    <text evidence="1">Belongs to the RNase HII family.</text>
</comment>
<sequence>MKGISRMSIREVSEVLNTEPSEEFLKACAQDERLGIQNLIVRYYKEWEARLVEAERIEALLREEKQLWLNGYLHIAGIDEAGRGPLAGPVVAATCILPAKFNLPGLNDSKKLTESKREKLFQQIKEQAIGYAVGSAEPAEIDGLNILQATKLAMKRAVEGLKVRPHFLLIDALELPSLKIPQKGIIDGDALSASIAAASILAKVSRDHLMGELDKLYPEYGFAKNKGYGTREHLMALRRCGVSPIHRRSFAPVQQQLDIV</sequence>
<name>RNH2_DESHY</name>
<accession>Q24UB4</accession>
<keyword id="KW-0963">Cytoplasm</keyword>
<keyword id="KW-0255">Endonuclease</keyword>
<keyword id="KW-0378">Hydrolase</keyword>
<keyword id="KW-0464">Manganese</keyword>
<keyword id="KW-0479">Metal-binding</keyword>
<keyword id="KW-0540">Nuclease</keyword>
<keyword id="KW-1185">Reference proteome</keyword>
<organism>
    <name type="scientific">Desulfitobacterium hafniense (strain Y51)</name>
    <dbReference type="NCBI Taxonomy" id="138119"/>
    <lineage>
        <taxon>Bacteria</taxon>
        <taxon>Bacillati</taxon>
        <taxon>Bacillota</taxon>
        <taxon>Clostridia</taxon>
        <taxon>Eubacteriales</taxon>
        <taxon>Desulfitobacteriaceae</taxon>
        <taxon>Desulfitobacterium</taxon>
    </lineage>
</organism>